<accession>P0CE75</accession>
<accession>P0C1Y3</accession>
<organism>
    <name type="scientific">Conus stercusmuscarum</name>
    <name type="common">Fly-specked cone</name>
    <dbReference type="NCBI Taxonomy" id="89452"/>
    <lineage>
        <taxon>Eukaryota</taxon>
        <taxon>Metazoa</taxon>
        <taxon>Spiralia</taxon>
        <taxon>Lophotrochozoa</taxon>
        <taxon>Mollusca</taxon>
        <taxon>Gastropoda</taxon>
        <taxon>Caenogastropoda</taxon>
        <taxon>Neogastropoda</taxon>
        <taxon>Conoidea</taxon>
        <taxon>Conidae</taxon>
        <taxon>Conus</taxon>
        <taxon>Pionoconus</taxon>
    </lineage>
</organism>
<reference key="1">
    <citation type="journal article" date="2004" name="J. Biol. Chem.">
        <title>The A-superfamily of conotoxins: structural and functional divergence.</title>
        <authorList>
            <person name="Santos A.D."/>
            <person name="McIntosh J.M."/>
            <person name="Hillyard D.R."/>
            <person name="Cruz L.J."/>
            <person name="Olivera B.M."/>
        </authorList>
    </citation>
    <scope>NUCLEOTIDE SEQUENCE [MRNA]</scope>
    <source>
        <tissue>Venom duct</tissue>
    </source>
</reference>
<evidence type="ECO:0000250" key="1">
    <source>
        <dbReference type="UniProtKB" id="P0C829"/>
    </source>
</evidence>
<evidence type="ECO:0000255" key="2"/>
<evidence type="ECO:0000303" key="3">
    <source>
    </source>
</evidence>
<evidence type="ECO:0000305" key="4"/>
<evidence type="ECO:0000305" key="5">
    <source>
    </source>
</evidence>
<name>CA4A_CONSE</name>
<keyword id="KW-0027">Amidation</keyword>
<keyword id="KW-1015">Disulfide bond</keyword>
<keyword id="KW-0325">Glycoprotein</keyword>
<keyword id="KW-0379">Hydroxylation</keyword>
<keyword id="KW-0872">Ion channel impairing toxin</keyword>
<keyword id="KW-0528">Neurotoxin</keyword>
<keyword id="KW-0873">Pyrrolidone carboxylic acid</keyword>
<keyword id="KW-0964">Secreted</keyword>
<keyword id="KW-0732">Signal</keyword>
<keyword id="KW-0800">Toxin</keyword>
<keyword id="KW-0738">Voltage-gated sodium channel impairing toxin</keyword>
<dbReference type="SMR" id="P0CE75"/>
<dbReference type="GO" id="GO:0005576">
    <property type="term" value="C:extracellular region"/>
    <property type="evidence" value="ECO:0007669"/>
    <property type="project" value="UniProtKB-SubCell"/>
</dbReference>
<dbReference type="GO" id="GO:0030550">
    <property type="term" value="F:acetylcholine receptor inhibitor activity"/>
    <property type="evidence" value="ECO:0007669"/>
    <property type="project" value="InterPro"/>
</dbReference>
<dbReference type="GO" id="GO:0017080">
    <property type="term" value="F:sodium channel regulator activity"/>
    <property type="evidence" value="ECO:0007669"/>
    <property type="project" value="UniProtKB-KW"/>
</dbReference>
<dbReference type="GO" id="GO:0090729">
    <property type="term" value="F:toxin activity"/>
    <property type="evidence" value="ECO:0007669"/>
    <property type="project" value="UniProtKB-KW"/>
</dbReference>
<dbReference type="InterPro" id="IPR009958">
    <property type="entry name" value="Conotoxin_a-typ"/>
</dbReference>
<dbReference type="Pfam" id="PF07365">
    <property type="entry name" value="Toxin_8"/>
    <property type="match status" value="1"/>
</dbReference>
<sequence length="80" mass="8778">MGMRMMFTVFLLVVLATTVVSIPSDRASDGRNAAVNERQTWLVPSTITTCCGYDPGTMCPTCMCDNTCKPKPKKSGRRND</sequence>
<feature type="signal peptide" evidence="2">
    <location>
        <begin position="1"/>
        <end position="21"/>
    </location>
</feature>
<feature type="propeptide" id="PRO_0000251236" evidence="1">
    <location>
        <begin position="22"/>
        <end position="38"/>
    </location>
</feature>
<feature type="peptide" id="PRO_0000251237" description="Conotoxin SmIVA" evidence="1">
    <location>
        <begin position="39"/>
        <end position="75"/>
    </location>
</feature>
<feature type="propeptide" id="PRO_0000251238" evidence="1">
    <location>
        <begin position="76"/>
        <end position="80"/>
    </location>
</feature>
<feature type="modified residue" description="Pyrrolidone carboxylic acid" evidence="1">
    <location>
        <position position="39"/>
    </location>
</feature>
<feature type="modified residue" description="4-hydroxyproline" evidence="1">
    <location>
        <position position="55"/>
    </location>
</feature>
<feature type="modified residue" description="4-hydroxyproline" evidence="1">
    <location>
        <position position="60"/>
    </location>
</feature>
<feature type="modified residue" description="4-hydroxyproline" evidence="1">
    <location>
        <position position="70"/>
    </location>
</feature>
<feature type="modified residue" description="4-hydroxyproline" evidence="1">
    <location>
        <position position="72"/>
    </location>
</feature>
<feature type="modified residue" description="Serine amide" evidence="1">
    <location>
        <position position="75"/>
    </location>
</feature>
<feature type="glycosylation site" description="O-linked (HexNAc...) serine" evidence="1">
    <location>
        <position position="45"/>
    </location>
</feature>
<protein>
    <recommendedName>
        <fullName evidence="3">Conotoxin SmIVA</fullName>
    </recommendedName>
</protein>
<comment type="function">
    <text evidence="1">Neurotoxin with probable activity on sodium channel. Induces intense repetitive firing of the frog neuromuscular junction, leading to a tetanic contracture in muscle fiber (spastic paralysis). In vivo, shows the same effect as the whole venom when injected on fish prey.</text>
</comment>
<comment type="subcellular location">
    <subcellularLocation>
        <location evidence="5">Secreted</location>
    </subcellularLocation>
</comment>
<comment type="tissue specificity">
    <text evidence="5">Expressed by the venom duct.</text>
</comment>
<comment type="domain">
    <text evidence="4">The cysteine framework is IV (CC-C-C-C-C).</text>
</comment>
<comment type="PTM">
    <text evidence="1">Contains 3 disulfide bonds.</text>
</comment>
<comment type="similarity">
    <text evidence="4">Belongs to the conotoxin A superfamily.</text>
</comment>
<proteinExistence type="inferred from homology"/>